<feature type="chain" id="PRO_0000273302" description="Segregation and condensation protein B">
    <location>
        <begin position="1"/>
        <end position="207"/>
    </location>
</feature>
<feature type="region of interest" description="Disordered" evidence="2">
    <location>
        <begin position="173"/>
        <end position="207"/>
    </location>
</feature>
<accession>Q38WV4</accession>
<evidence type="ECO:0000255" key="1">
    <source>
        <dbReference type="HAMAP-Rule" id="MF_01804"/>
    </source>
</evidence>
<evidence type="ECO:0000256" key="2">
    <source>
        <dbReference type="SAM" id="MobiDB-lite"/>
    </source>
</evidence>
<keyword id="KW-0131">Cell cycle</keyword>
<keyword id="KW-0132">Cell division</keyword>
<keyword id="KW-0159">Chromosome partition</keyword>
<keyword id="KW-0963">Cytoplasm</keyword>
<keyword id="KW-1185">Reference proteome</keyword>
<proteinExistence type="inferred from homology"/>
<dbReference type="EMBL" id="CR936503">
    <property type="protein sequence ID" value="CAI55327.1"/>
    <property type="molecule type" value="Genomic_DNA"/>
</dbReference>
<dbReference type="RefSeq" id="WP_011374727.1">
    <property type="nucleotide sequence ID" value="NC_007576.1"/>
</dbReference>
<dbReference type="SMR" id="Q38WV4"/>
<dbReference type="STRING" id="314315.LCA_1025"/>
<dbReference type="KEGG" id="lsa:LCA_1025"/>
<dbReference type="eggNOG" id="COG1386">
    <property type="taxonomic scope" value="Bacteria"/>
</dbReference>
<dbReference type="HOGENOM" id="CLU_045647_5_3_9"/>
<dbReference type="OrthoDB" id="9806226at2"/>
<dbReference type="Proteomes" id="UP000002707">
    <property type="component" value="Chromosome"/>
</dbReference>
<dbReference type="GO" id="GO:0005737">
    <property type="term" value="C:cytoplasm"/>
    <property type="evidence" value="ECO:0007669"/>
    <property type="project" value="UniProtKB-SubCell"/>
</dbReference>
<dbReference type="GO" id="GO:0051301">
    <property type="term" value="P:cell division"/>
    <property type="evidence" value="ECO:0007669"/>
    <property type="project" value="UniProtKB-KW"/>
</dbReference>
<dbReference type="GO" id="GO:0051304">
    <property type="term" value="P:chromosome separation"/>
    <property type="evidence" value="ECO:0007669"/>
    <property type="project" value="InterPro"/>
</dbReference>
<dbReference type="GO" id="GO:0006260">
    <property type="term" value="P:DNA replication"/>
    <property type="evidence" value="ECO:0007669"/>
    <property type="project" value="UniProtKB-UniRule"/>
</dbReference>
<dbReference type="Gene3D" id="1.10.10.10">
    <property type="entry name" value="Winged helix-like DNA-binding domain superfamily/Winged helix DNA-binding domain"/>
    <property type="match status" value="2"/>
</dbReference>
<dbReference type="HAMAP" id="MF_01804">
    <property type="entry name" value="ScpB"/>
    <property type="match status" value="1"/>
</dbReference>
<dbReference type="InterPro" id="IPR005234">
    <property type="entry name" value="ScpB_csome_segregation"/>
</dbReference>
<dbReference type="InterPro" id="IPR036388">
    <property type="entry name" value="WH-like_DNA-bd_sf"/>
</dbReference>
<dbReference type="InterPro" id="IPR036390">
    <property type="entry name" value="WH_DNA-bd_sf"/>
</dbReference>
<dbReference type="NCBIfam" id="TIGR00281">
    <property type="entry name" value="SMC-Scp complex subunit ScpB"/>
    <property type="match status" value="1"/>
</dbReference>
<dbReference type="PANTHER" id="PTHR34298">
    <property type="entry name" value="SEGREGATION AND CONDENSATION PROTEIN B"/>
    <property type="match status" value="1"/>
</dbReference>
<dbReference type="PANTHER" id="PTHR34298:SF2">
    <property type="entry name" value="SEGREGATION AND CONDENSATION PROTEIN B"/>
    <property type="match status" value="1"/>
</dbReference>
<dbReference type="Pfam" id="PF04079">
    <property type="entry name" value="SMC_ScpB"/>
    <property type="match status" value="1"/>
</dbReference>
<dbReference type="PIRSF" id="PIRSF019345">
    <property type="entry name" value="ScpB"/>
    <property type="match status" value="1"/>
</dbReference>
<dbReference type="SUPFAM" id="SSF46785">
    <property type="entry name" value="Winged helix' DNA-binding domain"/>
    <property type="match status" value="2"/>
</dbReference>
<name>SCPB_LATSS</name>
<protein>
    <recommendedName>
        <fullName evidence="1">Segregation and condensation protein B</fullName>
    </recommendedName>
</protein>
<reference key="1">
    <citation type="journal article" date="2005" name="Nat. Biotechnol.">
        <title>The complete genome sequence of the meat-borne lactic acid bacterium Lactobacillus sakei 23K.</title>
        <authorList>
            <person name="Chaillou S."/>
            <person name="Champomier-Verges M.-C."/>
            <person name="Cornet M."/>
            <person name="Crutz-Le Coq A.-M."/>
            <person name="Dudez A.-M."/>
            <person name="Martin V."/>
            <person name="Beaufils S."/>
            <person name="Darbon-Rongere E."/>
            <person name="Bossy R."/>
            <person name="Loux V."/>
            <person name="Zagorec M."/>
        </authorList>
    </citation>
    <scope>NUCLEOTIDE SEQUENCE [LARGE SCALE GENOMIC DNA]</scope>
    <source>
        <strain>23K</strain>
    </source>
</reference>
<gene>
    <name evidence="1" type="primary">scpB</name>
    <name type="ordered locus">LCA_1025</name>
</gene>
<organism>
    <name type="scientific">Latilactobacillus sakei subsp. sakei (strain 23K)</name>
    <name type="common">Lactobacillus sakei subsp. sakei</name>
    <dbReference type="NCBI Taxonomy" id="314315"/>
    <lineage>
        <taxon>Bacteria</taxon>
        <taxon>Bacillati</taxon>
        <taxon>Bacillota</taxon>
        <taxon>Bacilli</taxon>
        <taxon>Lactobacillales</taxon>
        <taxon>Lactobacillaceae</taxon>
        <taxon>Latilactobacillus</taxon>
    </lineage>
</organism>
<sequence length="207" mass="23019">MNHLAEIESLLYVAGDEGITLQHIARLIMLDEAAVRQLLTKLAKRYQEDEQSGLNLIQAADCYKLVTKKAYAGLLKAYFDGPVSTSISQAALEVLAIIVYRQPLTRIEIDEVRGVQSSGAIQTLLARQLIVEKGRKDAPGRPILYGTSDYFLDYFGLGSLKELPELEQMTLTDDTAESDNDSADLYYRQFEQTLNETGPETAPKGEQ</sequence>
<comment type="function">
    <text evidence="1">Participates in chromosomal partition during cell division. May act via the formation of a condensin-like complex containing Smc and ScpA that pull DNA away from mid-cell into both cell halves.</text>
</comment>
<comment type="subunit">
    <text evidence="1">Homodimer. Homodimerization may be required to stabilize the binding of ScpA to the Smc head domains. Component of a cohesin-like complex composed of ScpA, ScpB and the Smc homodimer, in which ScpA and ScpB bind to the head domain of Smc. The presence of the three proteins is required for the association of the complex with DNA.</text>
</comment>
<comment type="subcellular location">
    <subcellularLocation>
        <location evidence="1">Cytoplasm</location>
    </subcellularLocation>
    <text evidence="1">Associated with two foci at the outer edges of the nucleoid region in young cells, and at four foci within both cell halves in older cells.</text>
</comment>
<comment type="similarity">
    <text evidence="1">Belongs to the ScpB family.</text>
</comment>